<feature type="chain" id="PRO_0000114763" description="Cystathionine gamma-synthase">
    <location>
        <begin position="1"/>
        <end position="388"/>
    </location>
</feature>
<feature type="region of interest" description="Disordered" evidence="2">
    <location>
        <begin position="1"/>
        <end position="24"/>
    </location>
</feature>
<feature type="modified residue" description="N6-(pyridoxal phosphate)lysine" evidence="1">
    <location>
        <position position="208"/>
    </location>
</feature>
<sequence>MSEDRTGHQGISGPATRAIHAGYRPDPATGAVNVPIYASSTFAQDGVGGLRGGFEYARTGNPTRAALEASLAAVEEGAFARAFSSGMAATDCALRAMLRPGDHVVIPDDAYGGTFRLIDKVFTRWDVQYTPVRLADLDAVGAAITPRTRLIWVETPTNPLLSIADITAIAELGTDRSAKVLVDNTFASPALQQPLRLGADVVLHSTTKYIGGHSDVVGGALVTNDEELDEEFAFLQNGAGAVPGPFDAYLTMRGLKTLVLRMQRHSENACAVAEFLADHPSVSSVLYPGLPSHPGHEIAARQMRGFGGMVSVRMRAGRRAAQDLCAKTRVFILAESLGGVESLIEHPSAMTHASTAGSQLEVPDDLVRLSVGIEDIADLLGDLEQALG</sequence>
<reference key="1">
    <citation type="journal article" date="2003" name="Proc. Natl. Acad. Sci. U.S.A.">
        <title>The complete genome sequence of Mycobacterium bovis.</title>
        <authorList>
            <person name="Garnier T."/>
            <person name="Eiglmeier K."/>
            <person name="Camus J.-C."/>
            <person name="Medina N."/>
            <person name="Mansoor H."/>
            <person name="Pryor M."/>
            <person name="Duthoy S."/>
            <person name="Grondin S."/>
            <person name="Lacroix C."/>
            <person name="Monsempe C."/>
            <person name="Simon S."/>
            <person name="Harris B."/>
            <person name="Atkin R."/>
            <person name="Doggett J."/>
            <person name="Mayes R."/>
            <person name="Keating L."/>
            <person name="Wheeler P.R."/>
            <person name="Parkhill J."/>
            <person name="Barrell B.G."/>
            <person name="Cole S.T."/>
            <person name="Gordon S.V."/>
            <person name="Hewinson R.G."/>
        </authorList>
    </citation>
    <scope>NUCLEOTIDE SEQUENCE [LARGE SCALE GENOMIC DNA]</scope>
    <source>
        <strain>ATCC BAA-935 / AF2122/97</strain>
    </source>
</reference>
<reference key="2">
    <citation type="journal article" date="2017" name="Genome Announc.">
        <title>Updated reference genome sequence and annotation of Mycobacterium bovis AF2122/97.</title>
        <authorList>
            <person name="Malone K.M."/>
            <person name="Farrell D."/>
            <person name="Stuber T.P."/>
            <person name="Schubert O.T."/>
            <person name="Aebersold R."/>
            <person name="Robbe-Austerman S."/>
            <person name="Gordon S.V."/>
        </authorList>
    </citation>
    <scope>NUCLEOTIDE SEQUENCE [LARGE SCALE GENOMIC DNA]</scope>
    <scope>GENOME REANNOTATION</scope>
    <source>
        <strain>ATCC BAA-935 / AF2122/97</strain>
    </source>
</reference>
<accession>P66876</accession>
<accession>A0A1R3XXA4</accession>
<accession>O53427</accession>
<accession>X2BGV2</accession>
<evidence type="ECO:0000250" key="1"/>
<evidence type="ECO:0000256" key="2">
    <source>
        <dbReference type="SAM" id="MobiDB-lite"/>
    </source>
</evidence>
<evidence type="ECO:0000305" key="3"/>
<keyword id="KW-0028">Amino-acid biosynthesis</keyword>
<keyword id="KW-0963">Cytoplasm</keyword>
<keyword id="KW-0486">Methionine biosynthesis</keyword>
<keyword id="KW-0663">Pyridoxal phosphate</keyword>
<keyword id="KW-1185">Reference proteome</keyword>
<keyword id="KW-0808">Transferase</keyword>
<name>METB_MYCBO</name>
<organism>
    <name type="scientific">Mycobacterium bovis (strain ATCC BAA-935 / AF2122/97)</name>
    <dbReference type="NCBI Taxonomy" id="233413"/>
    <lineage>
        <taxon>Bacteria</taxon>
        <taxon>Bacillati</taxon>
        <taxon>Actinomycetota</taxon>
        <taxon>Actinomycetes</taxon>
        <taxon>Mycobacteriales</taxon>
        <taxon>Mycobacteriaceae</taxon>
        <taxon>Mycobacterium</taxon>
        <taxon>Mycobacterium tuberculosis complex</taxon>
    </lineage>
</organism>
<comment type="function">
    <text evidence="1">Catalyzes the formation of L-cystathionine from O-succinyl-L-homoserine (OSHS) and L-cysteine, via a gamma-replacement reaction. In the absence of thiol, catalyzes gamma-elimination to form 2-oxobutanoate, succinate and ammonia (By similarity).</text>
</comment>
<comment type="catalytic activity">
    <reaction>
        <text>O-succinyl-L-homoserine + L-cysteine = L,L-cystathionine + succinate + H(+)</text>
        <dbReference type="Rhea" id="RHEA:20397"/>
        <dbReference type="ChEBI" id="CHEBI:15378"/>
        <dbReference type="ChEBI" id="CHEBI:30031"/>
        <dbReference type="ChEBI" id="CHEBI:35235"/>
        <dbReference type="ChEBI" id="CHEBI:57661"/>
        <dbReference type="ChEBI" id="CHEBI:58161"/>
        <dbReference type="EC" id="2.5.1.48"/>
    </reaction>
</comment>
<comment type="cofactor">
    <cofactor evidence="1">
        <name>pyridoxal 5'-phosphate</name>
        <dbReference type="ChEBI" id="CHEBI:597326"/>
    </cofactor>
    <text evidence="1">Binds 1 pyridoxal phosphate per subunit.</text>
</comment>
<comment type="subunit">
    <text evidence="1">Homotetramer.</text>
</comment>
<comment type="subcellular location">
    <subcellularLocation>
        <location evidence="1">Cytoplasm</location>
    </subcellularLocation>
</comment>
<comment type="similarity">
    <text evidence="3">Belongs to the trans-sulfuration enzymes family.</text>
</comment>
<proteinExistence type="inferred from homology"/>
<protein>
    <recommendedName>
        <fullName>Cystathionine gamma-synthase</fullName>
        <shortName>CGS</shortName>
        <ecNumber>2.5.1.48</ecNumber>
    </recommendedName>
    <alternativeName>
        <fullName>O-succinylhomoserine (thiol)-lyase</fullName>
    </alternativeName>
</protein>
<gene>
    <name type="primary">metB</name>
    <name type="ordered locus">BQ2027_MB1108</name>
</gene>
<dbReference type="EC" id="2.5.1.48"/>
<dbReference type="EMBL" id="LT708304">
    <property type="protein sequence ID" value="SIT99707.1"/>
    <property type="molecule type" value="Genomic_DNA"/>
</dbReference>
<dbReference type="RefSeq" id="NP_854763.1">
    <property type="nucleotide sequence ID" value="NC_002945.3"/>
</dbReference>
<dbReference type="RefSeq" id="WP_003405736.1">
    <property type="nucleotide sequence ID" value="NC_002945.4"/>
</dbReference>
<dbReference type="SMR" id="P66876"/>
<dbReference type="KEGG" id="mbo:BQ2027_MB1108"/>
<dbReference type="PATRIC" id="fig|233413.5.peg.1209"/>
<dbReference type="Proteomes" id="UP000001419">
    <property type="component" value="Chromosome"/>
</dbReference>
<dbReference type="GO" id="GO:0005737">
    <property type="term" value="C:cytoplasm"/>
    <property type="evidence" value="ECO:0007669"/>
    <property type="project" value="UniProtKB-SubCell"/>
</dbReference>
<dbReference type="GO" id="GO:0004123">
    <property type="term" value="F:cystathionine gamma-lyase activity"/>
    <property type="evidence" value="ECO:0007669"/>
    <property type="project" value="TreeGrafter"/>
</dbReference>
<dbReference type="GO" id="GO:0003962">
    <property type="term" value="F:cystathionine gamma-synthase activity"/>
    <property type="evidence" value="ECO:0007669"/>
    <property type="project" value="UniProtKB-EC"/>
</dbReference>
<dbReference type="GO" id="GO:0030170">
    <property type="term" value="F:pyridoxal phosphate binding"/>
    <property type="evidence" value="ECO:0007669"/>
    <property type="project" value="InterPro"/>
</dbReference>
<dbReference type="GO" id="GO:0019343">
    <property type="term" value="P:cysteine biosynthetic process via cystathionine"/>
    <property type="evidence" value="ECO:0007669"/>
    <property type="project" value="TreeGrafter"/>
</dbReference>
<dbReference type="GO" id="GO:0009086">
    <property type="term" value="P:methionine biosynthetic process"/>
    <property type="evidence" value="ECO:0007669"/>
    <property type="project" value="UniProtKB-KW"/>
</dbReference>
<dbReference type="GO" id="GO:0019346">
    <property type="term" value="P:transsulfuration"/>
    <property type="evidence" value="ECO:0007669"/>
    <property type="project" value="InterPro"/>
</dbReference>
<dbReference type="CDD" id="cd00614">
    <property type="entry name" value="CGS_like"/>
    <property type="match status" value="1"/>
</dbReference>
<dbReference type="FunFam" id="3.90.1150.10:FF:000008">
    <property type="entry name" value="Cystathionine gamma-synthase"/>
    <property type="match status" value="1"/>
</dbReference>
<dbReference type="FunFam" id="3.40.640.10:FF:000009">
    <property type="entry name" value="Cystathionine gamma-synthase homolog"/>
    <property type="match status" value="1"/>
</dbReference>
<dbReference type="Gene3D" id="3.90.1150.10">
    <property type="entry name" value="Aspartate Aminotransferase, domain 1"/>
    <property type="match status" value="1"/>
</dbReference>
<dbReference type="Gene3D" id="3.40.640.10">
    <property type="entry name" value="Type I PLP-dependent aspartate aminotransferase-like (Major domain)"/>
    <property type="match status" value="1"/>
</dbReference>
<dbReference type="InterPro" id="IPR000277">
    <property type="entry name" value="Cys/Met-Metab_PyrdxlP-dep_enz"/>
</dbReference>
<dbReference type="InterPro" id="IPR054542">
    <property type="entry name" value="Cys_met_metab_PP"/>
</dbReference>
<dbReference type="InterPro" id="IPR015424">
    <property type="entry name" value="PyrdxlP-dep_Trfase"/>
</dbReference>
<dbReference type="InterPro" id="IPR015421">
    <property type="entry name" value="PyrdxlP-dep_Trfase_major"/>
</dbReference>
<dbReference type="InterPro" id="IPR015422">
    <property type="entry name" value="PyrdxlP-dep_Trfase_small"/>
</dbReference>
<dbReference type="NCBIfam" id="NF005871">
    <property type="entry name" value="PRK07811.1"/>
    <property type="match status" value="1"/>
</dbReference>
<dbReference type="PANTHER" id="PTHR11808:SF15">
    <property type="entry name" value="CYSTATHIONINE GAMMA-LYASE"/>
    <property type="match status" value="1"/>
</dbReference>
<dbReference type="PANTHER" id="PTHR11808">
    <property type="entry name" value="TRANS-SULFURATION ENZYME FAMILY MEMBER"/>
    <property type="match status" value="1"/>
</dbReference>
<dbReference type="Pfam" id="PF01053">
    <property type="entry name" value="Cys_Met_Meta_PP"/>
    <property type="match status" value="1"/>
</dbReference>
<dbReference type="PIRSF" id="PIRSF001434">
    <property type="entry name" value="CGS"/>
    <property type="match status" value="1"/>
</dbReference>
<dbReference type="SUPFAM" id="SSF53383">
    <property type="entry name" value="PLP-dependent transferases"/>
    <property type="match status" value="1"/>
</dbReference>
<dbReference type="PROSITE" id="PS00868">
    <property type="entry name" value="CYS_MET_METAB_PP"/>
    <property type="match status" value="1"/>
</dbReference>